<dbReference type="EMBL" id="CP000939">
    <property type="protein sequence ID" value="ACA43276.1"/>
    <property type="molecule type" value="Genomic_DNA"/>
</dbReference>
<dbReference type="RefSeq" id="WP_003401724.1">
    <property type="nucleotide sequence ID" value="NC_010516.1"/>
</dbReference>
<dbReference type="SMR" id="B1IGD5"/>
<dbReference type="KEGG" id="cbb:CLD_1043"/>
<dbReference type="HOGENOM" id="CLU_055188_4_2_9"/>
<dbReference type="Proteomes" id="UP000008541">
    <property type="component" value="Chromosome"/>
</dbReference>
<dbReference type="GO" id="GO:0022625">
    <property type="term" value="C:cytosolic large ribosomal subunit"/>
    <property type="evidence" value="ECO:0007669"/>
    <property type="project" value="TreeGrafter"/>
</dbReference>
<dbReference type="GO" id="GO:0019843">
    <property type="term" value="F:rRNA binding"/>
    <property type="evidence" value="ECO:0007669"/>
    <property type="project" value="UniProtKB-UniRule"/>
</dbReference>
<dbReference type="GO" id="GO:0003735">
    <property type="term" value="F:structural constituent of ribosome"/>
    <property type="evidence" value="ECO:0007669"/>
    <property type="project" value="InterPro"/>
</dbReference>
<dbReference type="GO" id="GO:0006412">
    <property type="term" value="P:translation"/>
    <property type="evidence" value="ECO:0007669"/>
    <property type="project" value="UniProtKB-UniRule"/>
</dbReference>
<dbReference type="Gene3D" id="3.100.10.10">
    <property type="match status" value="1"/>
</dbReference>
<dbReference type="HAMAP" id="MF_01341">
    <property type="entry name" value="Ribosomal_uL15"/>
    <property type="match status" value="1"/>
</dbReference>
<dbReference type="InterPro" id="IPR030878">
    <property type="entry name" value="Ribosomal_uL15"/>
</dbReference>
<dbReference type="InterPro" id="IPR021131">
    <property type="entry name" value="Ribosomal_uL15/eL18"/>
</dbReference>
<dbReference type="InterPro" id="IPR036227">
    <property type="entry name" value="Ribosomal_uL15/eL18_sf"/>
</dbReference>
<dbReference type="InterPro" id="IPR005749">
    <property type="entry name" value="Ribosomal_uL15_bac-type"/>
</dbReference>
<dbReference type="InterPro" id="IPR001196">
    <property type="entry name" value="Ribosomal_uL15_CS"/>
</dbReference>
<dbReference type="NCBIfam" id="TIGR01071">
    <property type="entry name" value="rplO_bact"/>
    <property type="match status" value="1"/>
</dbReference>
<dbReference type="PANTHER" id="PTHR12934">
    <property type="entry name" value="50S RIBOSOMAL PROTEIN L15"/>
    <property type="match status" value="1"/>
</dbReference>
<dbReference type="PANTHER" id="PTHR12934:SF11">
    <property type="entry name" value="LARGE RIBOSOMAL SUBUNIT PROTEIN UL15M"/>
    <property type="match status" value="1"/>
</dbReference>
<dbReference type="Pfam" id="PF00828">
    <property type="entry name" value="Ribosomal_L27A"/>
    <property type="match status" value="1"/>
</dbReference>
<dbReference type="SUPFAM" id="SSF52080">
    <property type="entry name" value="Ribosomal proteins L15p and L18e"/>
    <property type="match status" value="1"/>
</dbReference>
<dbReference type="PROSITE" id="PS00475">
    <property type="entry name" value="RIBOSOMAL_L15"/>
    <property type="match status" value="1"/>
</dbReference>
<gene>
    <name evidence="1" type="primary">rplO</name>
    <name type="ordered locus">CLD_1043</name>
</gene>
<reference key="1">
    <citation type="journal article" date="2007" name="PLoS ONE">
        <title>Analysis of the neurotoxin complex genes in Clostridium botulinum A1-A4 and B1 strains: BoNT/A3, /Ba4 and /B1 clusters are located within plasmids.</title>
        <authorList>
            <person name="Smith T.J."/>
            <person name="Hill K.K."/>
            <person name="Foley B.T."/>
            <person name="Detter J.C."/>
            <person name="Munk A.C."/>
            <person name="Bruce D.C."/>
            <person name="Doggett N.A."/>
            <person name="Smith L.A."/>
            <person name="Marks J.D."/>
            <person name="Xie G."/>
            <person name="Brettin T.S."/>
        </authorList>
    </citation>
    <scope>NUCLEOTIDE SEQUENCE [LARGE SCALE GENOMIC DNA]</scope>
    <source>
        <strain>Okra / Type B1</strain>
    </source>
</reference>
<name>RL15_CLOBK</name>
<keyword id="KW-0687">Ribonucleoprotein</keyword>
<keyword id="KW-0689">Ribosomal protein</keyword>
<keyword id="KW-0694">RNA-binding</keyword>
<keyword id="KW-0699">rRNA-binding</keyword>
<sequence length="146" mass="15637">MKLHELRAAEGANKASKRVGRGTGSGLGKTSGRGQNGQNSRSGGGVRPGFEGGQMPLYRRLPKRGFKNIFAKEYAAINLDRLNCFEDGTVVTPELLVEKRVVKKVKDGVKILGNGNIEKKLTVKAAKFSKSAIEKIEAAGGKVEVI</sequence>
<comment type="function">
    <text evidence="1">Binds to the 23S rRNA.</text>
</comment>
<comment type="subunit">
    <text evidence="1">Part of the 50S ribosomal subunit.</text>
</comment>
<comment type="similarity">
    <text evidence="1">Belongs to the universal ribosomal protein uL15 family.</text>
</comment>
<organism>
    <name type="scientific">Clostridium botulinum (strain Okra / Type B1)</name>
    <dbReference type="NCBI Taxonomy" id="498213"/>
    <lineage>
        <taxon>Bacteria</taxon>
        <taxon>Bacillati</taxon>
        <taxon>Bacillota</taxon>
        <taxon>Clostridia</taxon>
        <taxon>Eubacteriales</taxon>
        <taxon>Clostridiaceae</taxon>
        <taxon>Clostridium</taxon>
    </lineage>
</organism>
<feature type="chain" id="PRO_1000142796" description="Large ribosomal subunit protein uL15">
    <location>
        <begin position="1"/>
        <end position="146"/>
    </location>
</feature>
<feature type="region of interest" description="Disordered" evidence="2">
    <location>
        <begin position="1"/>
        <end position="56"/>
    </location>
</feature>
<feature type="compositionally biased region" description="Gly residues" evidence="2">
    <location>
        <begin position="21"/>
        <end position="35"/>
    </location>
</feature>
<feature type="compositionally biased region" description="Gly residues" evidence="2">
    <location>
        <begin position="42"/>
        <end position="52"/>
    </location>
</feature>
<protein>
    <recommendedName>
        <fullName evidence="1">Large ribosomal subunit protein uL15</fullName>
    </recommendedName>
    <alternativeName>
        <fullName evidence="3">50S ribosomal protein L15</fullName>
    </alternativeName>
</protein>
<evidence type="ECO:0000255" key="1">
    <source>
        <dbReference type="HAMAP-Rule" id="MF_01341"/>
    </source>
</evidence>
<evidence type="ECO:0000256" key="2">
    <source>
        <dbReference type="SAM" id="MobiDB-lite"/>
    </source>
</evidence>
<evidence type="ECO:0000305" key="3"/>
<proteinExistence type="inferred from homology"/>
<accession>B1IGD5</accession>